<gene>
    <name evidence="1" type="primary">glpK</name>
    <name type="ordered locus">KPK_0085</name>
</gene>
<dbReference type="EC" id="2.7.1.30" evidence="1"/>
<dbReference type="EMBL" id="CP000964">
    <property type="protein sequence ID" value="ACI10708.1"/>
    <property type="molecule type" value="Genomic_DNA"/>
</dbReference>
<dbReference type="SMR" id="B5XTD4"/>
<dbReference type="KEGG" id="kpe:KPK_0085"/>
<dbReference type="HOGENOM" id="CLU_009281_2_3_6"/>
<dbReference type="UniPathway" id="UPA00618">
    <property type="reaction ID" value="UER00672"/>
</dbReference>
<dbReference type="Proteomes" id="UP000001734">
    <property type="component" value="Chromosome"/>
</dbReference>
<dbReference type="GO" id="GO:0005829">
    <property type="term" value="C:cytosol"/>
    <property type="evidence" value="ECO:0007669"/>
    <property type="project" value="TreeGrafter"/>
</dbReference>
<dbReference type="GO" id="GO:0005524">
    <property type="term" value="F:ATP binding"/>
    <property type="evidence" value="ECO:0007669"/>
    <property type="project" value="UniProtKB-UniRule"/>
</dbReference>
<dbReference type="GO" id="GO:0004370">
    <property type="term" value="F:glycerol kinase activity"/>
    <property type="evidence" value="ECO:0000250"/>
    <property type="project" value="UniProtKB"/>
</dbReference>
<dbReference type="GO" id="GO:0046872">
    <property type="term" value="F:metal ion binding"/>
    <property type="evidence" value="ECO:0007669"/>
    <property type="project" value="UniProtKB-KW"/>
</dbReference>
<dbReference type="GO" id="GO:0019563">
    <property type="term" value="P:glycerol catabolic process"/>
    <property type="evidence" value="ECO:0007669"/>
    <property type="project" value="UniProtKB-UniRule"/>
</dbReference>
<dbReference type="GO" id="GO:0006071">
    <property type="term" value="P:glycerol metabolic process"/>
    <property type="evidence" value="ECO:0000250"/>
    <property type="project" value="UniProtKB"/>
</dbReference>
<dbReference type="GO" id="GO:0006072">
    <property type="term" value="P:glycerol-3-phosphate metabolic process"/>
    <property type="evidence" value="ECO:0007669"/>
    <property type="project" value="InterPro"/>
</dbReference>
<dbReference type="CDD" id="cd07769">
    <property type="entry name" value="ASKHA_NBD_FGGY_GK"/>
    <property type="match status" value="1"/>
</dbReference>
<dbReference type="FunFam" id="3.30.420.40:FF:000007">
    <property type="entry name" value="Glycerol kinase"/>
    <property type="match status" value="1"/>
</dbReference>
<dbReference type="FunFam" id="3.30.420.40:FF:000008">
    <property type="entry name" value="Glycerol kinase"/>
    <property type="match status" value="1"/>
</dbReference>
<dbReference type="Gene3D" id="3.30.420.40">
    <property type="match status" value="2"/>
</dbReference>
<dbReference type="HAMAP" id="MF_00186">
    <property type="entry name" value="Glycerol_kin"/>
    <property type="match status" value="1"/>
</dbReference>
<dbReference type="InterPro" id="IPR043129">
    <property type="entry name" value="ATPase_NBD"/>
</dbReference>
<dbReference type="InterPro" id="IPR000577">
    <property type="entry name" value="Carb_kinase_FGGY"/>
</dbReference>
<dbReference type="InterPro" id="IPR018483">
    <property type="entry name" value="Carb_kinase_FGGY_CS"/>
</dbReference>
<dbReference type="InterPro" id="IPR018485">
    <property type="entry name" value="FGGY_C"/>
</dbReference>
<dbReference type="InterPro" id="IPR018484">
    <property type="entry name" value="FGGY_N"/>
</dbReference>
<dbReference type="InterPro" id="IPR005999">
    <property type="entry name" value="Glycerol_kin"/>
</dbReference>
<dbReference type="NCBIfam" id="TIGR01311">
    <property type="entry name" value="glycerol_kin"/>
    <property type="match status" value="1"/>
</dbReference>
<dbReference type="NCBIfam" id="NF000756">
    <property type="entry name" value="PRK00047.1"/>
    <property type="match status" value="1"/>
</dbReference>
<dbReference type="PANTHER" id="PTHR10196:SF69">
    <property type="entry name" value="GLYCEROL KINASE"/>
    <property type="match status" value="1"/>
</dbReference>
<dbReference type="PANTHER" id="PTHR10196">
    <property type="entry name" value="SUGAR KINASE"/>
    <property type="match status" value="1"/>
</dbReference>
<dbReference type="Pfam" id="PF02782">
    <property type="entry name" value="FGGY_C"/>
    <property type="match status" value="1"/>
</dbReference>
<dbReference type="Pfam" id="PF00370">
    <property type="entry name" value="FGGY_N"/>
    <property type="match status" value="1"/>
</dbReference>
<dbReference type="PIRSF" id="PIRSF000538">
    <property type="entry name" value="GlpK"/>
    <property type="match status" value="1"/>
</dbReference>
<dbReference type="SUPFAM" id="SSF53067">
    <property type="entry name" value="Actin-like ATPase domain"/>
    <property type="match status" value="2"/>
</dbReference>
<dbReference type="PROSITE" id="PS00933">
    <property type="entry name" value="FGGY_KINASES_1"/>
    <property type="match status" value="1"/>
</dbReference>
<dbReference type="PROSITE" id="PS00445">
    <property type="entry name" value="FGGY_KINASES_2"/>
    <property type="match status" value="1"/>
</dbReference>
<proteinExistence type="inferred from homology"/>
<keyword id="KW-0021">Allosteric enzyme</keyword>
<keyword id="KW-0067">ATP-binding</keyword>
<keyword id="KW-0319">Glycerol metabolism</keyword>
<keyword id="KW-0418">Kinase</keyword>
<keyword id="KW-0479">Metal-binding</keyword>
<keyword id="KW-0547">Nucleotide-binding</keyword>
<keyword id="KW-0808">Transferase</keyword>
<keyword id="KW-0862">Zinc</keyword>
<protein>
    <recommendedName>
        <fullName evidence="1">Glycerol kinase</fullName>
        <ecNumber evidence="1">2.7.1.30</ecNumber>
    </recommendedName>
    <alternativeName>
        <fullName evidence="1">ATP:glycerol 3-phosphotransferase</fullName>
    </alternativeName>
    <alternativeName>
        <fullName evidence="1">Glycerokinase</fullName>
        <shortName evidence="1">GK</shortName>
    </alternativeName>
</protein>
<reference key="1">
    <citation type="journal article" date="2008" name="PLoS Genet.">
        <title>Complete genome sequence of the N2-fixing broad host range endophyte Klebsiella pneumoniae 342 and virulence predictions verified in mice.</title>
        <authorList>
            <person name="Fouts D.E."/>
            <person name="Tyler H.L."/>
            <person name="DeBoy R.T."/>
            <person name="Daugherty S."/>
            <person name="Ren Q."/>
            <person name="Badger J.H."/>
            <person name="Durkin A.S."/>
            <person name="Huot H."/>
            <person name="Shrivastava S."/>
            <person name="Kothari S."/>
            <person name="Dodson R.J."/>
            <person name="Mohamoud Y."/>
            <person name="Khouri H."/>
            <person name="Roesch L.F.W."/>
            <person name="Krogfelt K.A."/>
            <person name="Struve C."/>
            <person name="Triplett E.W."/>
            <person name="Methe B.A."/>
        </authorList>
    </citation>
    <scope>NUCLEOTIDE SEQUENCE [LARGE SCALE GENOMIC DNA]</scope>
    <source>
        <strain>342</strain>
    </source>
</reference>
<comment type="function">
    <text evidence="1">Key enzyme in the regulation of glycerol uptake and metabolism. Catalyzes the phosphorylation of glycerol to yield sn-glycerol 3-phosphate.</text>
</comment>
<comment type="catalytic activity">
    <reaction evidence="1">
        <text>glycerol + ATP = sn-glycerol 3-phosphate + ADP + H(+)</text>
        <dbReference type="Rhea" id="RHEA:21644"/>
        <dbReference type="ChEBI" id="CHEBI:15378"/>
        <dbReference type="ChEBI" id="CHEBI:17754"/>
        <dbReference type="ChEBI" id="CHEBI:30616"/>
        <dbReference type="ChEBI" id="CHEBI:57597"/>
        <dbReference type="ChEBI" id="CHEBI:456216"/>
        <dbReference type="EC" id="2.7.1.30"/>
    </reaction>
</comment>
<comment type="activity regulation">
    <text evidence="1">Activity of this regulatory enzyme is affected by several metabolites. Allosterically and non-competitively inhibited by fructose 1,6-bisphosphate (FBP) and unphosphorylated phosphocarrier protein EIIA-Glc (III-Glc), an integral component of the bacterial phosphotransferase (PTS) system.</text>
</comment>
<comment type="pathway">
    <text evidence="1">Polyol metabolism; glycerol degradation via glycerol kinase pathway; sn-glycerol 3-phosphate from glycerol: step 1/1.</text>
</comment>
<comment type="subunit">
    <text evidence="1">Homotetramer and homodimer (in equilibrium). Heterodimer with EIIA-Glc. Binds 1 zinc ion per glycerol kinase EIIA-Glc dimer. The zinc ion is important for dimerization.</text>
</comment>
<comment type="similarity">
    <text evidence="1">Belongs to the FGGY kinase family.</text>
</comment>
<organism>
    <name type="scientific">Klebsiella pneumoniae (strain 342)</name>
    <dbReference type="NCBI Taxonomy" id="507522"/>
    <lineage>
        <taxon>Bacteria</taxon>
        <taxon>Pseudomonadati</taxon>
        <taxon>Pseudomonadota</taxon>
        <taxon>Gammaproteobacteria</taxon>
        <taxon>Enterobacterales</taxon>
        <taxon>Enterobacteriaceae</taxon>
        <taxon>Klebsiella/Raoultella group</taxon>
        <taxon>Klebsiella</taxon>
        <taxon>Klebsiella pneumoniae complex</taxon>
    </lineage>
</organism>
<evidence type="ECO:0000255" key="1">
    <source>
        <dbReference type="HAMAP-Rule" id="MF_00186"/>
    </source>
</evidence>
<accession>B5XTD4</accession>
<name>GLPK_KLEP3</name>
<sequence>MTDKKYIVALDQGTTSSRAVVMDHDANIVSVSQREFEQIYPKPGWVEHDPMEIWASQSSTLVEALAKADINSDQIAAIGITNQRETVVVWERETGKPIYNAIVWQCRRTAEICEQLKRDGMEEYIRKATGLVVDPYFSGTKVKWILDHVEGSRERAKRGELLFGTVDTWLIWKMTQGRVHVTDYTNASRTMLFNIHELDWDDKMLDALDIPRAMLPEVRKSSEVYGQTNIGGKGGTRIPIAGIAGDQQAALFGQLCVKEGMAKNTYGTGCFMLMNTGEKAVTSTHGLLTTIACGPRGEVNYALEGAVFMAGASIQWLRDEMKLISDAFDSEYFATKVKDTNGVYVVPAFTGLGAPYWDPYARGAIFGLTRGVNSNHIIRATLESIAYQTRDVLEAMQADSGIRLHALRVDGGAVANNFLMQFQSDILGTRVERPEVREVTALGAAYLAGLAVGFWQNLDELQEKAVIEREFRPGIETTERNYRYSGWKKAVKRALAWEEHDEA</sequence>
<feature type="chain" id="PRO_1000098737" description="Glycerol kinase">
    <location>
        <begin position="1"/>
        <end position="503"/>
    </location>
</feature>
<feature type="binding site" evidence="1">
    <location>
        <position position="14"/>
    </location>
    <ligand>
        <name>ADP</name>
        <dbReference type="ChEBI" id="CHEBI:456216"/>
    </ligand>
</feature>
<feature type="binding site" evidence="1">
    <location>
        <position position="14"/>
    </location>
    <ligand>
        <name>ATP</name>
        <dbReference type="ChEBI" id="CHEBI:30616"/>
    </ligand>
</feature>
<feature type="binding site" evidence="1">
    <location>
        <position position="14"/>
    </location>
    <ligand>
        <name>sn-glycerol 3-phosphate</name>
        <dbReference type="ChEBI" id="CHEBI:57597"/>
    </ligand>
</feature>
<feature type="binding site" evidence="1">
    <location>
        <position position="15"/>
    </location>
    <ligand>
        <name>ATP</name>
        <dbReference type="ChEBI" id="CHEBI:30616"/>
    </ligand>
</feature>
<feature type="binding site" evidence="1">
    <location>
        <position position="16"/>
    </location>
    <ligand>
        <name>ATP</name>
        <dbReference type="ChEBI" id="CHEBI:30616"/>
    </ligand>
</feature>
<feature type="binding site" evidence="1">
    <location>
        <position position="18"/>
    </location>
    <ligand>
        <name>ADP</name>
        <dbReference type="ChEBI" id="CHEBI:456216"/>
    </ligand>
</feature>
<feature type="binding site" evidence="1">
    <location>
        <position position="84"/>
    </location>
    <ligand>
        <name>glycerol</name>
        <dbReference type="ChEBI" id="CHEBI:17754"/>
    </ligand>
</feature>
<feature type="binding site" evidence="1">
    <location>
        <position position="84"/>
    </location>
    <ligand>
        <name>sn-glycerol 3-phosphate</name>
        <dbReference type="ChEBI" id="CHEBI:57597"/>
    </ligand>
</feature>
<feature type="binding site" evidence="1">
    <location>
        <position position="85"/>
    </location>
    <ligand>
        <name>glycerol</name>
        <dbReference type="ChEBI" id="CHEBI:17754"/>
    </ligand>
</feature>
<feature type="binding site" evidence="1">
    <location>
        <position position="85"/>
    </location>
    <ligand>
        <name>sn-glycerol 3-phosphate</name>
        <dbReference type="ChEBI" id="CHEBI:57597"/>
    </ligand>
</feature>
<feature type="binding site" evidence="1">
    <location>
        <position position="136"/>
    </location>
    <ligand>
        <name>glycerol</name>
        <dbReference type="ChEBI" id="CHEBI:17754"/>
    </ligand>
</feature>
<feature type="binding site" evidence="1">
    <location>
        <position position="136"/>
    </location>
    <ligand>
        <name>sn-glycerol 3-phosphate</name>
        <dbReference type="ChEBI" id="CHEBI:57597"/>
    </ligand>
</feature>
<feature type="binding site" evidence="1">
    <location>
        <position position="246"/>
    </location>
    <ligand>
        <name>glycerol</name>
        <dbReference type="ChEBI" id="CHEBI:17754"/>
    </ligand>
</feature>
<feature type="binding site" evidence="1">
    <location>
        <position position="246"/>
    </location>
    <ligand>
        <name>sn-glycerol 3-phosphate</name>
        <dbReference type="ChEBI" id="CHEBI:57597"/>
    </ligand>
</feature>
<feature type="binding site" evidence="1">
    <location>
        <position position="247"/>
    </location>
    <ligand>
        <name>glycerol</name>
        <dbReference type="ChEBI" id="CHEBI:17754"/>
    </ligand>
</feature>
<feature type="binding site" evidence="1">
    <location>
        <position position="268"/>
    </location>
    <ligand>
        <name>ADP</name>
        <dbReference type="ChEBI" id="CHEBI:456216"/>
    </ligand>
</feature>
<feature type="binding site" evidence="1">
    <location>
        <position position="268"/>
    </location>
    <ligand>
        <name>ATP</name>
        <dbReference type="ChEBI" id="CHEBI:30616"/>
    </ligand>
</feature>
<feature type="binding site" evidence="1">
    <location>
        <position position="311"/>
    </location>
    <ligand>
        <name>ADP</name>
        <dbReference type="ChEBI" id="CHEBI:456216"/>
    </ligand>
</feature>
<feature type="binding site" evidence="1">
    <location>
        <position position="311"/>
    </location>
    <ligand>
        <name>ATP</name>
        <dbReference type="ChEBI" id="CHEBI:30616"/>
    </ligand>
</feature>
<feature type="binding site" evidence="1">
    <location>
        <position position="315"/>
    </location>
    <ligand>
        <name>ATP</name>
        <dbReference type="ChEBI" id="CHEBI:30616"/>
    </ligand>
</feature>
<feature type="binding site" evidence="1">
    <location>
        <position position="412"/>
    </location>
    <ligand>
        <name>ADP</name>
        <dbReference type="ChEBI" id="CHEBI:456216"/>
    </ligand>
</feature>
<feature type="binding site" evidence="1">
    <location>
        <position position="412"/>
    </location>
    <ligand>
        <name>ATP</name>
        <dbReference type="ChEBI" id="CHEBI:30616"/>
    </ligand>
</feature>
<feature type="binding site" evidence="1">
    <location>
        <position position="416"/>
    </location>
    <ligand>
        <name>ADP</name>
        <dbReference type="ChEBI" id="CHEBI:456216"/>
    </ligand>
</feature>